<organism>
    <name type="scientific">Escherichia coli (strain K12)</name>
    <dbReference type="NCBI Taxonomy" id="83333"/>
    <lineage>
        <taxon>Bacteria</taxon>
        <taxon>Pseudomonadati</taxon>
        <taxon>Pseudomonadota</taxon>
        <taxon>Gammaproteobacteria</taxon>
        <taxon>Enterobacterales</taxon>
        <taxon>Enterobacteriaceae</taxon>
        <taxon>Escherichia</taxon>
    </lineage>
</organism>
<gene>
    <name evidence="1" type="primary">nadK</name>
    <name type="synonym">yfjB</name>
    <name type="synonym">yfjE</name>
    <name type="ordered locus">b2615</name>
    <name type="ordered locus">JW2596</name>
</gene>
<evidence type="ECO:0000255" key="1">
    <source>
        <dbReference type="HAMAP-Rule" id="MF_00361"/>
    </source>
</evidence>
<evidence type="ECO:0000269" key="2">
    <source>
    </source>
</evidence>
<evidence type="ECO:0000269" key="3">
    <source>
    </source>
</evidence>
<evidence type="ECO:0000269" key="4">
    <source>
    </source>
</evidence>
<evidence type="ECO:0000305" key="5"/>
<comment type="function">
    <text evidence="1 2 3 4">Involved in the regulation of the intracellular balance of NAD and NADP, and is a key enzyme in the biosynthesis of NADP. Catalyzes specifically the phosphorylation on 2'-hydroxyl of the adenosine moiety of NAD to yield NADP. It can use ATP and other nucleoside triphosphates (UTP, CTP, GTP, dATP, TTP) as phosphoryl donors, while nucleoside mono- or diphosphates and poly(P) cannot.</text>
</comment>
<comment type="catalytic activity">
    <reaction evidence="1 2 3 4">
        <text>NAD(+) + ATP = ADP + NADP(+) + H(+)</text>
        <dbReference type="Rhea" id="RHEA:18629"/>
        <dbReference type="ChEBI" id="CHEBI:15378"/>
        <dbReference type="ChEBI" id="CHEBI:30616"/>
        <dbReference type="ChEBI" id="CHEBI:57540"/>
        <dbReference type="ChEBI" id="CHEBI:58349"/>
        <dbReference type="ChEBI" id="CHEBI:456216"/>
        <dbReference type="EC" id="2.7.1.23"/>
    </reaction>
</comment>
<comment type="cofactor">
    <cofactor evidence="1 2">
        <name>a divalent metal cation</name>
        <dbReference type="ChEBI" id="CHEBI:60240"/>
    </cofactor>
</comment>
<comment type="activity regulation">
    <text evidence="2 4">Competitively and allosterically inhibited by NADH and NADPH at physiological concentrations, whereas inhibition by NADP is only slight. Inhibited by p-chloromercuribenzoate and HgCl(2).</text>
</comment>
<comment type="biophysicochemical properties">
    <kinetics>
        <KM evidence="2 3 4">2 mM for NAD (at pH 7 and 37 degrees Celsius)</KM>
        <KM evidence="2 3 4">2.5 mM for ATP (at pH 7 and 37 degrees Celsius)</KM>
        <KM evidence="2 3 4">4.1 mM for magnesium (at pH 7 and 37 degrees Celsius)</KM>
        <Vmax evidence="2 3 4">12.86 umol/min/mg enzyme (at pH 7 and 37 degrees Celsius)</Vmax>
        <text>kcat is 55 sec(-1) for kinase activity with ATP. kcat is 125 sec(-1) for kinase activity with NAD.</text>
    </kinetics>
    <phDependence>
        <text evidence="2 3 4">Optimum pH is between 7.2 and 7.5.</text>
    </phDependence>
    <temperatureDependence>
        <text evidence="2 3 4">Optimum temperature is 60 degrees Celsius and half of the activity is lost on treatment at 65 degrees Celsius for 10 minutes.</text>
    </temperatureDependence>
</comment>
<comment type="subunit">
    <text evidence="2">Homohexamer.</text>
</comment>
<comment type="subcellular location">
    <subcellularLocation>
        <location evidence="1">Cytoplasm</location>
    </subcellularLocation>
</comment>
<comment type="similarity">
    <text evidence="1">Belongs to the NAD kinase family.</text>
</comment>
<comment type="sequence caution" evidence="5">
    <conflict type="frameshift">
        <sequence resource="EMBL" id="X07863"/>
    </conflict>
</comment>
<comment type="sequence caution" evidence="5">
    <conflict type="frameshift">
        <sequence resource="EMBL" id="Y00357"/>
    </conflict>
</comment>
<accession>P0A7B3</accession>
<accession>P37768</accession>
<accession>P46140</accession>
<accession>P77490</accession>
<dbReference type="EC" id="2.7.1.23" evidence="1"/>
<dbReference type="EMBL" id="U36840">
    <property type="protein sequence ID" value="AAA79785.1"/>
    <property type="molecule type" value="Genomic_DNA"/>
</dbReference>
<dbReference type="EMBL" id="U00096">
    <property type="protein sequence ID" value="AAC75664.1"/>
    <property type="molecule type" value="Genomic_DNA"/>
</dbReference>
<dbReference type="EMBL" id="AP009048">
    <property type="protein sequence ID" value="BAA16500.1"/>
    <property type="molecule type" value="Genomic_DNA"/>
</dbReference>
<dbReference type="EMBL" id="X07863">
    <property type="status" value="NOT_ANNOTATED_CDS"/>
    <property type="molecule type" value="Genomic_DNA"/>
</dbReference>
<dbReference type="EMBL" id="Y00357">
    <property type="status" value="NOT_ANNOTATED_CDS"/>
    <property type="molecule type" value="Genomic_DNA"/>
</dbReference>
<dbReference type="PIR" id="B65040">
    <property type="entry name" value="B65040"/>
</dbReference>
<dbReference type="RefSeq" id="NP_417105.1">
    <property type="nucleotide sequence ID" value="NC_000913.3"/>
</dbReference>
<dbReference type="RefSeq" id="WP_001059169.1">
    <property type="nucleotide sequence ID" value="NZ_STEB01000040.1"/>
</dbReference>
<dbReference type="SASBDB" id="P0A7B3"/>
<dbReference type="SMR" id="P0A7B3"/>
<dbReference type="BioGRID" id="4260607">
    <property type="interactions" value="22"/>
</dbReference>
<dbReference type="BioGRID" id="851428">
    <property type="interactions" value="4"/>
</dbReference>
<dbReference type="DIP" id="DIP-48103N"/>
<dbReference type="FunCoup" id="P0A7B3">
    <property type="interactions" value="810"/>
</dbReference>
<dbReference type="IntAct" id="P0A7B3">
    <property type="interactions" value="4"/>
</dbReference>
<dbReference type="STRING" id="511145.b2615"/>
<dbReference type="jPOST" id="P0A7B3"/>
<dbReference type="PaxDb" id="511145-b2615"/>
<dbReference type="EnsemblBacteria" id="AAC75664">
    <property type="protein sequence ID" value="AAC75664"/>
    <property type="gene ID" value="b2615"/>
</dbReference>
<dbReference type="GeneID" id="93774464"/>
<dbReference type="GeneID" id="947092"/>
<dbReference type="KEGG" id="ecj:JW2596"/>
<dbReference type="KEGG" id="eco:b2615"/>
<dbReference type="KEGG" id="ecoc:C3026_14475"/>
<dbReference type="PATRIC" id="fig|1411691.4.peg.4124"/>
<dbReference type="EchoBASE" id="EB2109"/>
<dbReference type="eggNOG" id="COG0061">
    <property type="taxonomic scope" value="Bacteria"/>
</dbReference>
<dbReference type="HOGENOM" id="CLU_008831_0_1_6"/>
<dbReference type="InParanoid" id="P0A7B3"/>
<dbReference type="OMA" id="SMCHFEI"/>
<dbReference type="OrthoDB" id="9774737at2"/>
<dbReference type="PhylomeDB" id="P0A7B3"/>
<dbReference type="BioCyc" id="EcoCyc:MONOMER0-541"/>
<dbReference type="BioCyc" id="MetaCyc:MONOMER0-541"/>
<dbReference type="BRENDA" id="2.7.1.23">
    <property type="organism ID" value="414"/>
</dbReference>
<dbReference type="SABIO-RK" id="P0A7B3"/>
<dbReference type="PRO" id="PR:P0A7B3"/>
<dbReference type="Proteomes" id="UP000000625">
    <property type="component" value="Chromosome"/>
</dbReference>
<dbReference type="GO" id="GO:0005829">
    <property type="term" value="C:cytosol"/>
    <property type="evidence" value="ECO:0000314"/>
    <property type="project" value="EcoCyc"/>
</dbReference>
<dbReference type="GO" id="GO:0005524">
    <property type="term" value="F:ATP binding"/>
    <property type="evidence" value="ECO:0000314"/>
    <property type="project" value="UniProtKB"/>
</dbReference>
<dbReference type="GO" id="GO:0046872">
    <property type="term" value="F:metal ion binding"/>
    <property type="evidence" value="ECO:0007669"/>
    <property type="project" value="UniProtKB-UniRule"/>
</dbReference>
<dbReference type="GO" id="GO:0051287">
    <property type="term" value="F:NAD binding"/>
    <property type="evidence" value="ECO:0000314"/>
    <property type="project" value="UniProtKB"/>
</dbReference>
<dbReference type="GO" id="GO:0003951">
    <property type="term" value="F:NAD+ kinase activity"/>
    <property type="evidence" value="ECO:0000314"/>
    <property type="project" value="EcoCyc"/>
</dbReference>
<dbReference type="GO" id="GO:0019674">
    <property type="term" value="P:NAD metabolic process"/>
    <property type="evidence" value="ECO:0007669"/>
    <property type="project" value="InterPro"/>
</dbReference>
<dbReference type="GO" id="GO:0006741">
    <property type="term" value="P:NADP biosynthetic process"/>
    <property type="evidence" value="ECO:0000314"/>
    <property type="project" value="EcoCyc"/>
</dbReference>
<dbReference type="FunFam" id="2.60.200.30:FF:000001">
    <property type="entry name" value="NAD kinase"/>
    <property type="match status" value="1"/>
</dbReference>
<dbReference type="FunFam" id="3.40.50.10330:FF:000004">
    <property type="entry name" value="NAD kinase"/>
    <property type="match status" value="1"/>
</dbReference>
<dbReference type="Gene3D" id="3.40.50.10330">
    <property type="entry name" value="Probable inorganic polyphosphate/atp-NAD kinase, domain 1"/>
    <property type="match status" value="1"/>
</dbReference>
<dbReference type="Gene3D" id="2.60.200.30">
    <property type="entry name" value="Probable inorganic polyphosphate/atp-NAD kinase, domain 2"/>
    <property type="match status" value="1"/>
</dbReference>
<dbReference type="HAMAP" id="MF_00361">
    <property type="entry name" value="NAD_kinase"/>
    <property type="match status" value="1"/>
</dbReference>
<dbReference type="InterPro" id="IPR017438">
    <property type="entry name" value="ATP-NAD_kinase_N"/>
</dbReference>
<dbReference type="InterPro" id="IPR017437">
    <property type="entry name" value="ATP-NAD_kinase_PpnK-typ_C"/>
</dbReference>
<dbReference type="InterPro" id="IPR016064">
    <property type="entry name" value="NAD/diacylglycerol_kinase_sf"/>
</dbReference>
<dbReference type="InterPro" id="IPR002504">
    <property type="entry name" value="NADK"/>
</dbReference>
<dbReference type="NCBIfam" id="NF002306">
    <property type="entry name" value="PRK01231.1"/>
    <property type="match status" value="1"/>
</dbReference>
<dbReference type="NCBIfam" id="NF002893">
    <property type="entry name" value="PRK03378.1"/>
    <property type="match status" value="1"/>
</dbReference>
<dbReference type="PANTHER" id="PTHR20275">
    <property type="entry name" value="NAD KINASE"/>
    <property type="match status" value="1"/>
</dbReference>
<dbReference type="PANTHER" id="PTHR20275:SF0">
    <property type="entry name" value="NAD KINASE"/>
    <property type="match status" value="1"/>
</dbReference>
<dbReference type="Pfam" id="PF01513">
    <property type="entry name" value="NAD_kinase"/>
    <property type="match status" value="1"/>
</dbReference>
<dbReference type="Pfam" id="PF20143">
    <property type="entry name" value="NAD_kinase_C"/>
    <property type="match status" value="1"/>
</dbReference>
<dbReference type="SUPFAM" id="SSF111331">
    <property type="entry name" value="NAD kinase/diacylglycerol kinase-like"/>
    <property type="match status" value="1"/>
</dbReference>
<proteinExistence type="evidence at protein level"/>
<reference key="1">
    <citation type="journal article" date="1997" name="DNA Res.">
        <title>Construction of a contiguous 874-kb sequence of the Escherichia coli-K12 genome corresponding to 50.0-68.8 min on the linkage map and analysis of its sequence features.</title>
        <authorList>
            <person name="Yamamoto Y."/>
            <person name="Aiba H."/>
            <person name="Baba T."/>
            <person name="Hayashi K."/>
            <person name="Inada T."/>
            <person name="Isono K."/>
            <person name="Itoh T."/>
            <person name="Kimura S."/>
            <person name="Kitagawa M."/>
            <person name="Makino K."/>
            <person name="Miki T."/>
            <person name="Mitsuhashi N."/>
            <person name="Mizobuchi K."/>
            <person name="Mori H."/>
            <person name="Nakade S."/>
            <person name="Nakamura Y."/>
            <person name="Nashimoto H."/>
            <person name="Oshima T."/>
            <person name="Oyama S."/>
            <person name="Saito N."/>
            <person name="Sampei G."/>
            <person name="Satoh Y."/>
            <person name="Sivasundaram S."/>
            <person name="Tagami H."/>
            <person name="Takahashi H."/>
            <person name="Takeda J."/>
            <person name="Takemoto K."/>
            <person name="Uehara K."/>
            <person name="Wada C."/>
            <person name="Yamagata S."/>
            <person name="Horiuchi T."/>
        </authorList>
    </citation>
    <scope>NUCLEOTIDE SEQUENCE [LARGE SCALE GENOMIC DNA]</scope>
    <source>
        <strain>K12 / W3110 / ATCC 27325 / DSM 5911</strain>
    </source>
</reference>
<reference key="2">
    <citation type="journal article" date="1997" name="Science">
        <title>The complete genome sequence of Escherichia coli K-12.</title>
        <authorList>
            <person name="Blattner F.R."/>
            <person name="Plunkett G. III"/>
            <person name="Bloch C.A."/>
            <person name="Perna N.T."/>
            <person name="Burland V."/>
            <person name="Riley M."/>
            <person name="Collado-Vides J."/>
            <person name="Glasner J.D."/>
            <person name="Rode C.K."/>
            <person name="Mayhew G.F."/>
            <person name="Gregor J."/>
            <person name="Davis N.W."/>
            <person name="Kirkpatrick H.A."/>
            <person name="Goeden M.A."/>
            <person name="Rose D.J."/>
            <person name="Mau B."/>
            <person name="Shao Y."/>
        </authorList>
    </citation>
    <scope>NUCLEOTIDE SEQUENCE [LARGE SCALE GENOMIC DNA]</scope>
    <source>
        <strain>K12 / MG1655 / ATCC 47076</strain>
    </source>
</reference>
<reference key="3">
    <citation type="journal article" date="2006" name="Mol. Syst. Biol.">
        <title>Highly accurate genome sequences of Escherichia coli K-12 strains MG1655 and W3110.</title>
        <authorList>
            <person name="Hayashi K."/>
            <person name="Morooka N."/>
            <person name="Yamamoto Y."/>
            <person name="Fujita K."/>
            <person name="Isono K."/>
            <person name="Choi S."/>
            <person name="Ohtsubo E."/>
            <person name="Baba T."/>
            <person name="Wanner B.L."/>
            <person name="Mori H."/>
            <person name="Horiuchi T."/>
        </authorList>
    </citation>
    <scope>NUCLEOTIDE SEQUENCE [LARGE SCALE GENOMIC DNA]</scope>
    <source>
        <strain>K12 / W3110 / ATCC 27325 / DSM 5911</strain>
    </source>
</reference>
<reference key="4">
    <citation type="journal article" date="1988" name="Nucleic Acids Res.">
        <title>Sequence analysis and transcriptional regulation of the Escherichia coli grpE gene, encoding a heat shock protein.</title>
        <authorList>
            <person name="Lipinska B."/>
            <person name="King J."/>
            <person name="Ang D."/>
            <person name="Georgopoulos C."/>
        </authorList>
    </citation>
    <scope>NUCLEOTIDE SEQUENCE [GENOMIC DNA] OF 1-163</scope>
    <source>
        <strain>B178</strain>
    </source>
</reference>
<reference key="5">
    <citation type="journal article" date="1987" name="Nucleic Acids Res.">
        <title>Nucleotide sequence and LexA regulation of the Escherichia coli recN gene.</title>
        <authorList>
            <person name="Rostas K."/>
            <person name="Morton S.J."/>
            <person name="Picksley S.M."/>
            <person name="Lloyd R.G."/>
        </authorList>
    </citation>
    <scope>NUCLEOTIDE SEQUENCE [GENOMIC DNA] OF 194-292</scope>
    <source>
        <strain>K12</strain>
    </source>
</reference>
<reference key="6">
    <citation type="journal article" date="2001" name="Eur. J. Biochem.">
        <title>Molecular characterization of Escherichia coli NAD kinase.</title>
        <authorList>
            <person name="Kawai S."/>
            <person name="Mori S."/>
            <person name="Mukai T."/>
            <person name="Hashimoto W."/>
            <person name="Murata K."/>
        </authorList>
    </citation>
    <scope>PROTEIN SEQUENCE OF 1-10</scope>
    <scope>FUNCTION</scope>
    <scope>CATALYTIC ACTIVITY</scope>
    <scope>SUBSTRATE SPECIFICITY</scope>
    <scope>BIOPHYSICOCHEMICAL PROPERTIES</scope>
    <scope>ACTIVITY REGULATION</scope>
    <scope>COFACTOR</scope>
    <scope>SUBUNIT</scope>
    <source>
        <strain>K12 / MG1655 / ATCC 47076</strain>
    </source>
</reference>
<reference key="7">
    <citation type="journal article" date="1987" name="J. Bacteriol.">
        <title>Negative modulation of Escherichia coli NAD kinase by NADPH and NADH.</title>
        <authorList>
            <person name="Zerez C.R."/>
            <person name="Moul D.E."/>
            <person name="Gomez E.G."/>
            <person name="Lopez V.M."/>
            <person name="Andreoli A.J."/>
        </authorList>
    </citation>
    <scope>FUNCTION</scope>
    <scope>CATALYTIC ACTIVITY</scope>
    <scope>BIOPHYSICOCHEMICAL PROPERTIES</scope>
    <scope>ACTIVITY REGULATION</scope>
    <source>
        <strain>K12 / MG1655 / ATCC 47076</strain>
    </source>
</reference>
<reference key="8">
    <citation type="journal article" date="1994" name="Nucleic Acids Res.">
        <title>Intrinsic and extrinsic approaches for detecting genes in a bacterial genome.</title>
        <authorList>
            <person name="Borodovsky M."/>
            <person name="Rudd K.E."/>
            <person name="Koonin E.V."/>
        </authorList>
    </citation>
    <scope>IDENTIFICATION</scope>
</reference>
<reference key="9">
    <citation type="journal article" date="2005" name="J. Biol. Chem.">
        <title>Molecular conversion of NAD kinase to NADH kinase through single amino acid residue substitution.</title>
        <authorList>
            <person name="Mori S."/>
            <person name="Kawai S."/>
            <person name="Shi F."/>
            <person name="Mikami B."/>
            <person name="Murata K."/>
        </authorList>
    </citation>
    <scope>FUNCTION</scope>
    <scope>CATALYTIC ACTIVITY</scope>
    <scope>MUTAGENESIS OF ARG-175</scope>
    <scope>BIOPHYSICOCHEMICAL PROPERTIES</scope>
    <scope>BINDING SPECIFICITY</scope>
</reference>
<protein>
    <recommendedName>
        <fullName evidence="1">NAD kinase</fullName>
        <ecNumber evidence="1">2.7.1.23</ecNumber>
    </recommendedName>
    <alternativeName>
        <fullName evidence="1">ATP-dependent NAD kinase</fullName>
    </alternativeName>
</protein>
<name>NADK_ECOLI</name>
<sequence>MNNHFKCIGIVGHPRHPTALTTHEMLYRWLCTKGYEVIVEQQIAHELQLKNVKTGTLAEIGQLADLAVVVGGDGNMLGAARTLARYDIKVIGINRGNLGFLTDLDPDNAQQQLADVLEGHYISEKRFLLEAQVCQQDCQKRISTAINEVVLHPGKVAHMIEFEVYIDEIFAFSQRSDGLIISTPTGSTAYSLSAGGPILTPSLDAITLVPMFPHTLSARPLVINSSSTIRLRFSHRRNDLEISCDSQIALPIQEGEDVLIRRCDYHLNLIHPKDYSYFNTLSTKLGWSKKLF</sequence>
<keyword id="KW-0067">ATP-binding</keyword>
<keyword id="KW-0963">Cytoplasm</keyword>
<keyword id="KW-0903">Direct protein sequencing</keyword>
<keyword id="KW-0418">Kinase</keyword>
<keyword id="KW-0520">NAD</keyword>
<keyword id="KW-0521">NADP</keyword>
<keyword id="KW-0547">Nucleotide-binding</keyword>
<keyword id="KW-1185">Reference proteome</keyword>
<keyword id="KW-0808">Transferase</keyword>
<feature type="chain" id="PRO_0000120616" description="NAD kinase">
    <location>
        <begin position="1"/>
        <end position="292"/>
    </location>
</feature>
<feature type="active site" description="Proton acceptor" evidence="1">
    <location>
        <position position="73"/>
    </location>
</feature>
<feature type="binding site" evidence="1">
    <location>
        <begin position="73"/>
        <end position="74"/>
    </location>
    <ligand>
        <name>NAD(+)</name>
        <dbReference type="ChEBI" id="CHEBI:57540"/>
    </ligand>
</feature>
<feature type="binding site" evidence="1">
    <location>
        <begin position="147"/>
        <end position="148"/>
    </location>
    <ligand>
        <name>NAD(+)</name>
        <dbReference type="ChEBI" id="CHEBI:57540"/>
    </ligand>
</feature>
<feature type="binding site" evidence="1">
    <location>
        <position position="158"/>
    </location>
    <ligand>
        <name>NAD(+)</name>
        <dbReference type="ChEBI" id="CHEBI:57540"/>
    </ligand>
</feature>
<feature type="binding site" evidence="1">
    <location>
        <position position="175"/>
    </location>
    <ligand>
        <name>NAD(+)</name>
        <dbReference type="ChEBI" id="CHEBI:57540"/>
    </ligand>
</feature>
<feature type="binding site" evidence="1">
    <location>
        <position position="177"/>
    </location>
    <ligand>
        <name>NAD(+)</name>
        <dbReference type="ChEBI" id="CHEBI:57540"/>
    </ligand>
</feature>
<feature type="binding site" evidence="1">
    <location>
        <position position="185"/>
    </location>
    <ligand>
        <name>NAD(+)</name>
        <dbReference type="ChEBI" id="CHEBI:57540"/>
    </ligand>
</feature>
<feature type="binding site" evidence="1">
    <location>
        <begin position="188"/>
        <end position="193"/>
    </location>
    <ligand>
        <name>NAD(+)</name>
        <dbReference type="ChEBI" id="CHEBI:57540"/>
    </ligand>
</feature>
<feature type="binding site" evidence="1">
    <location>
        <position position="247"/>
    </location>
    <ligand>
        <name>NAD(+)</name>
        <dbReference type="ChEBI" id="CHEBI:57540"/>
    </ligand>
</feature>
<feature type="site" description="Responsible for conferring strict specificity to NAD">
    <location>
        <position position="175"/>
    </location>
</feature>
<feature type="mutagenesis site" description="Does not exhibit NADH kinase activity in addition to NAD kinase activity." evidence="3">
    <original>R</original>
    <variation>E</variation>
    <location>
        <position position="175"/>
    </location>
</feature>
<feature type="mutagenesis site" description="Exhibits NADH kinase activity in addition to NAD kinase activity. Reduces the Vmax of the NAD kinase activity." evidence="3">
    <original>R</original>
    <variation>G</variation>
    <location>
        <position position="175"/>
    </location>
</feature>
<feature type="mutagenesis site" description="Exhibits NADH kinase activity in addition to NAD kinase activity." evidence="3">
    <original>R</original>
    <variation>H</variation>
    <location>
        <position position="175"/>
    </location>
</feature>
<feature type="mutagenesis site" description="Does not exhibit NADH kinase activity in addition to NAD kinase activity." evidence="3">
    <original>R</original>
    <variation>I</variation>
    <location>
        <position position="175"/>
    </location>
</feature>
<feature type="mutagenesis site" description="Does not exhibit NADH kinase activity in addition to NAD kinase activity." evidence="3">
    <original>R</original>
    <variation>K</variation>
    <location>
        <position position="175"/>
    </location>
</feature>
<feature type="mutagenesis site" description="Exhibits NADH kinase activity in addition to NAD kinase activity." evidence="3">
    <original>R</original>
    <variation>Q</variation>
    <location>
        <position position="175"/>
    </location>
</feature>
<feature type="mutagenesis site" description="Exhibits NADH kinase activity in addition to NAD kinase activity." evidence="3">
    <original>R</original>
    <variation>T</variation>
    <location>
        <position position="175"/>
    </location>
</feature>